<evidence type="ECO:0000255" key="1">
    <source>
        <dbReference type="HAMAP-Rule" id="MF_01543"/>
    </source>
</evidence>
<sequence length="558" mass="60414">MNFKSDIQIAQECSMENIKDIAKKLNIFEDEIELYGKYKAKIDYNLLKTTKGKNGKLILCTAINPTPAGEGKTTTSIGVADALARLDKSVVVALREPSMGPVFGIKGGAAGGGYAQVVPMEDINLHFTGDIHAMTAANNLLAALIDNHIYQGNKLNIDSRRVVWRRCVDMNDRQLRFVVDGLGGKVNGIPREDGFDITVASEIMAIFCLSTDINDLKERISKIVVGYTTEGNPVTAHDLKAEGAMAALLKDALKPNLVQTLEGTPAFVHGGPFANIAHGCNSIMATRMAMHFGDYVVTEAGFGADLGAEKFLDIKCRMAGLRPDAVIIVATVRALKYNGGTPKTKLNNENLETLEKGIPNLLKHVENITKVFKLPAVVALNAFPTDTEAELKLVEEKCREFGVSVKLSEVWAKGGEGGIEVAKEVLRLINEGKNDFQFAYDEKLPIRDKIRAIAQKIYGADGVTFTNQAEKEIDELEKLGFGKTPVCIAKTQYSLTDDQNKLGRPKGFKITVRQVSISAGAGFVVAITGSIMKMPGLPKVPAAEKIDVDENGVISGLF</sequence>
<proteinExistence type="inferred from homology"/>
<comment type="catalytic activity">
    <reaction evidence="1">
        <text>(6S)-5,6,7,8-tetrahydrofolate + formate + ATP = (6R)-10-formyltetrahydrofolate + ADP + phosphate</text>
        <dbReference type="Rhea" id="RHEA:20221"/>
        <dbReference type="ChEBI" id="CHEBI:15740"/>
        <dbReference type="ChEBI" id="CHEBI:30616"/>
        <dbReference type="ChEBI" id="CHEBI:43474"/>
        <dbReference type="ChEBI" id="CHEBI:57453"/>
        <dbReference type="ChEBI" id="CHEBI:195366"/>
        <dbReference type="ChEBI" id="CHEBI:456216"/>
        <dbReference type="EC" id="6.3.4.3"/>
    </reaction>
</comment>
<comment type="pathway">
    <text evidence="1">One-carbon metabolism; tetrahydrofolate interconversion.</text>
</comment>
<comment type="similarity">
    <text evidence="1">Belongs to the formate--tetrahydrofolate ligase family.</text>
</comment>
<protein>
    <recommendedName>
        <fullName evidence="1">Formate--tetrahydrofolate ligase</fullName>
        <ecNumber evidence="1">6.3.4.3</ecNumber>
    </recommendedName>
    <alternativeName>
        <fullName evidence="1">Formyltetrahydrofolate synthetase</fullName>
        <shortName evidence="1">FHS</shortName>
        <shortName evidence="1">FTHFS</shortName>
    </alternativeName>
</protein>
<feature type="chain" id="PRO_1000087651" description="Formate--tetrahydrofolate ligase">
    <location>
        <begin position="1"/>
        <end position="558"/>
    </location>
</feature>
<feature type="binding site" evidence="1">
    <location>
        <begin position="66"/>
        <end position="73"/>
    </location>
    <ligand>
        <name>ATP</name>
        <dbReference type="ChEBI" id="CHEBI:30616"/>
    </ligand>
</feature>
<organism>
    <name type="scientific">Clostridium kluyveri (strain ATCC 8527 / DSM 555 / NBRC 12016 / NCIMB 10680 / K1)</name>
    <dbReference type="NCBI Taxonomy" id="431943"/>
    <lineage>
        <taxon>Bacteria</taxon>
        <taxon>Bacillati</taxon>
        <taxon>Bacillota</taxon>
        <taxon>Clostridia</taxon>
        <taxon>Eubacteriales</taxon>
        <taxon>Clostridiaceae</taxon>
        <taxon>Clostridium</taxon>
    </lineage>
</organism>
<name>FTHS_CLOK5</name>
<keyword id="KW-0067">ATP-binding</keyword>
<keyword id="KW-0436">Ligase</keyword>
<keyword id="KW-0547">Nucleotide-binding</keyword>
<keyword id="KW-0554">One-carbon metabolism</keyword>
<keyword id="KW-1185">Reference proteome</keyword>
<dbReference type="EC" id="6.3.4.3" evidence="1"/>
<dbReference type="EMBL" id="CP000673">
    <property type="protein sequence ID" value="EDK32494.1"/>
    <property type="molecule type" value="Genomic_DNA"/>
</dbReference>
<dbReference type="RefSeq" id="WP_011989009.1">
    <property type="nucleotide sequence ID" value="NC_009706.1"/>
</dbReference>
<dbReference type="SMR" id="A5N5B3"/>
<dbReference type="STRING" id="431943.CKL_0440"/>
<dbReference type="KEGG" id="ckl:CKL_0440"/>
<dbReference type="eggNOG" id="COG2759">
    <property type="taxonomic scope" value="Bacteria"/>
</dbReference>
<dbReference type="HOGENOM" id="CLU_003601_3_3_9"/>
<dbReference type="UniPathway" id="UPA00193"/>
<dbReference type="Proteomes" id="UP000002411">
    <property type="component" value="Chromosome"/>
</dbReference>
<dbReference type="GO" id="GO:0005524">
    <property type="term" value="F:ATP binding"/>
    <property type="evidence" value="ECO:0007669"/>
    <property type="project" value="UniProtKB-UniRule"/>
</dbReference>
<dbReference type="GO" id="GO:0004329">
    <property type="term" value="F:formate-tetrahydrofolate ligase activity"/>
    <property type="evidence" value="ECO:0007669"/>
    <property type="project" value="UniProtKB-UniRule"/>
</dbReference>
<dbReference type="GO" id="GO:0035999">
    <property type="term" value="P:tetrahydrofolate interconversion"/>
    <property type="evidence" value="ECO:0007669"/>
    <property type="project" value="UniProtKB-UniRule"/>
</dbReference>
<dbReference type="CDD" id="cd00477">
    <property type="entry name" value="FTHFS"/>
    <property type="match status" value="1"/>
</dbReference>
<dbReference type="FunFam" id="3.30.1510.10:FF:000001">
    <property type="entry name" value="Formate--tetrahydrofolate ligase"/>
    <property type="match status" value="1"/>
</dbReference>
<dbReference type="FunFam" id="3.10.410.10:FF:000001">
    <property type="entry name" value="Putative formate--tetrahydrofolate ligase"/>
    <property type="match status" value="1"/>
</dbReference>
<dbReference type="Gene3D" id="3.30.1510.10">
    <property type="entry name" value="Domain 2, N(10)-formyltetrahydrofolate synthetase"/>
    <property type="match status" value="1"/>
</dbReference>
<dbReference type="Gene3D" id="3.10.410.10">
    <property type="entry name" value="Formyltetrahydrofolate synthetase, domain 3"/>
    <property type="match status" value="1"/>
</dbReference>
<dbReference type="Gene3D" id="3.40.50.300">
    <property type="entry name" value="P-loop containing nucleotide triphosphate hydrolases"/>
    <property type="match status" value="1"/>
</dbReference>
<dbReference type="HAMAP" id="MF_01543">
    <property type="entry name" value="FTHFS"/>
    <property type="match status" value="1"/>
</dbReference>
<dbReference type="InterPro" id="IPR000559">
    <property type="entry name" value="Formate_THF_ligase"/>
</dbReference>
<dbReference type="InterPro" id="IPR020628">
    <property type="entry name" value="Formate_THF_ligase_CS"/>
</dbReference>
<dbReference type="InterPro" id="IPR027417">
    <property type="entry name" value="P-loop_NTPase"/>
</dbReference>
<dbReference type="NCBIfam" id="NF010030">
    <property type="entry name" value="PRK13505.1"/>
    <property type="match status" value="1"/>
</dbReference>
<dbReference type="Pfam" id="PF01268">
    <property type="entry name" value="FTHFS"/>
    <property type="match status" value="1"/>
</dbReference>
<dbReference type="SUPFAM" id="SSF52540">
    <property type="entry name" value="P-loop containing nucleoside triphosphate hydrolases"/>
    <property type="match status" value="1"/>
</dbReference>
<dbReference type="PROSITE" id="PS00721">
    <property type="entry name" value="FTHFS_1"/>
    <property type="match status" value="1"/>
</dbReference>
<dbReference type="PROSITE" id="PS00722">
    <property type="entry name" value="FTHFS_2"/>
    <property type="match status" value="1"/>
</dbReference>
<reference key="1">
    <citation type="journal article" date="2008" name="Proc. Natl. Acad. Sci. U.S.A.">
        <title>The genome of Clostridium kluyveri, a strict anaerobe with unique metabolic features.</title>
        <authorList>
            <person name="Seedorf H."/>
            <person name="Fricke W.F."/>
            <person name="Veith B."/>
            <person name="Brueggemann H."/>
            <person name="Liesegang H."/>
            <person name="Strittmatter A."/>
            <person name="Miethke M."/>
            <person name="Buckel W."/>
            <person name="Hinderberger J."/>
            <person name="Li F."/>
            <person name="Hagemeier C."/>
            <person name="Thauer R.K."/>
            <person name="Gottschalk G."/>
        </authorList>
    </citation>
    <scope>NUCLEOTIDE SEQUENCE [LARGE SCALE GENOMIC DNA]</scope>
    <source>
        <strain>ATCC 8527 / DSM 555 / NBRC 12016 / NCIMB 10680 / K1</strain>
    </source>
</reference>
<accession>A5N5B3</accession>
<gene>
    <name evidence="1" type="primary">fhs</name>
    <name type="ordered locus">CKL_0440</name>
</gene>